<organism>
    <name type="scientific">Streptococcus pyogenes serotype M49 (strain NZ131)</name>
    <dbReference type="NCBI Taxonomy" id="471876"/>
    <lineage>
        <taxon>Bacteria</taxon>
        <taxon>Bacillati</taxon>
        <taxon>Bacillota</taxon>
        <taxon>Bacilli</taxon>
        <taxon>Lactobacillales</taxon>
        <taxon>Streptococcaceae</taxon>
        <taxon>Streptococcus</taxon>
    </lineage>
</organism>
<proteinExistence type="inferred from homology"/>
<gene>
    <name type="ordered locus">Spy49_1277c</name>
</gene>
<comment type="similarity">
    <text evidence="1">Belongs to the UPF0398 family.</text>
</comment>
<protein>
    <recommendedName>
        <fullName evidence="1">UPF0398 protein Spy49_1277c</fullName>
    </recommendedName>
</protein>
<evidence type="ECO:0000255" key="1">
    <source>
        <dbReference type="HAMAP-Rule" id="MF_01575"/>
    </source>
</evidence>
<sequence>MTAILITGYRSFEIGIFDHKDPRVSIIKQAIRKDLIGYLENGVDWFIFTGNLGFEQWALEVANELKEEYPLQIATIFLFETHGDKWNEKNQEVLSQFRAVDFVKYYFPNYEQPTQFSQYYQFLLEKTEGAYVFYDTENETNLKYFLKKAKDMPHYQLLLLTFDRLNDMS</sequence>
<reference key="1">
    <citation type="journal article" date="2008" name="J. Bacteriol.">
        <title>Genome sequence of a nephritogenic and highly transformable M49 strain of Streptococcus pyogenes.</title>
        <authorList>
            <person name="McShan W.M."/>
            <person name="Ferretti J.J."/>
            <person name="Karasawa T."/>
            <person name="Suvorov A.N."/>
            <person name="Lin S."/>
            <person name="Qin B."/>
            <person name="Jia H."/>
            <person name="Kenton S."/>
            <person name="Najar F."/>
            <person name="Wu H."/>
            <person name="Scott J."/>
            <person name="Roe B.A."/>
            <person name="Savic D.J."/>
        </authorList>
    </citation>
    <scope>NUCLEOTIDE SEQUENCE [LARGE SCALE GENOMIC DNA]</scope>
    <source>
        <strain>NZ131</strain>
    </source>
</reference>
<name>Y1277_STRPZ</name>
<dbReference type="EMBL" id="CP000829">
    <property type="protein sequence ID" value="ACI61560.1"/>
    <property type="molecule type" value="Genomic_DNA"/>
</dbReference>
<dbReference type="SMR" id="B5XMJ8"/>
<dbReference type="KEGG" id="soz:Spy49_1277c"/>
<dbReference type="HOGENOM" id="CLU_105319_0_0_9"/>
<dbReference type="Proteomes" id="UP000001039">
    <property type="component" value="Chromosome"/>
</dbReference>
<dbReference type="Gene3D" id="3.40.50.450">
    <property type="match status" value="1"/>
</dbReference>
<dbReference type="HAMAP" id="MF_01575">
    <property type="entry name" value="UPF0398"/>
    <property type="match status" value="1"/>
</dbReference>
<dbReference type="InterPro" id="IPR010697">
    <property type="entry name" value="YspA"/>
</dbReference>
<dbReference type="NCBIfam" id="NF010181">
    <property type="entry name" value="PRK13660.1"/>
    <property type="match status" value="1"/>
</dbReference>
<dbReference type="PANTHER" id="PTHR38440:SF1">
    <property type="entry name" value="UPF0398 PROTEIN SPR0331"/>
    <property type="match status" value="1"/>
</dbReference>
<dbReference type="PANTHER" id="PTHR38440">
    <property type="entry name" value="UPF0398 PROTEIN YPSA"/>
    <property type="match status" value="1"/>
</dbReference>
<dbReference type="Pfam" id="PF06908">
    <property type="entry name" value="YpsA"/>
    <property type="match status" value="1"/>
</dbReference>
<dbReference type="PIRSF" id="PIRSF021290">
    <property type="entry name" value="DUF1273"/>
    <property type="match status" value="1"/>
</dbReference>
<dbReference type="SUPFAM" id="SSF102405">
    <property type="entry name" value="MCP/YpsA-like"/>
    <property type="match status" value="1"/>
</dbReference>
<feature type="chain" id="PRO_0000382552" description="UPF0398 protein Spy49_1277c">
    <location>
        <begin position="1"/>
        <end position="169"/>
    </location>
</feature>
<accession>B5XMJ8</accession>